<reference key="1">
    <citation type="journal article" date="2008" name="J. Bacteriol.">
        <title>Insights into the environmental resistance gene pool from the genome sequence of the multidrug-resistant environmental isolate Escherichia coli SMS-3-5.</title>
        <authorList>
            <person name="Fricke W.F."/>
            <person name="Wright M.S."/>
            <person name="Lindell A.H."/>
            <person name="Harkins D.M."/>
            <person name="Baker-Austin C."/>
            <person name="Ravel J."/>
            <person name="Stepanauskas R."/>
        </authorList>
    </citation>
    <scope>NUCLEOTIDE SEQUENCE [LARGE SCALE GENOMIC DNA]</scope>
    <source>
        <strain>SMS-3-5 / SECEC</strain>
    </source>
</reference>
<name>ASTC_ECOSM</name>
<organism>
    <name type="scientific">Escherichia coli (strain SMS-3-5 / SECEC)</name>
    <dbReference type="NCBI Taxonomy" id="439855"/>
    <lineage>
        <taxon>Bacteria</taxon>
        <taxon>Pseudomonadati</taxon>
        <taxon>Pseudomonadota</taxon>
        <taxon>Gammaproteobacteria</taxon>
        <taxon>Enterobacterales</taxon>
        <taxon>Enterobacteriaceae</taxon>
        <taxon>Escherichia</taxon>
    </lineage>
</organism>
<evidence type="ECO:0000255" key="1">
    <source>
        <dbReference type="HAMAP-Rule" id="MF_01173"/>
    </source>
</evidence>
<gene>
    <name evidence="1" type="primary">astC</name>
    <name evidence="1" type="synonym">argM</name>
    <name type="ordered locus">EcSMS35_1443</name>
</gene>
<feature type="chain" id="PRO_1000164387" description="Succinylornithine transaminase">
    <location>
        <begin position="1"/>
        <end position="406"/>
    </location>
</feature>
<feature type="modified residue" description="N6-(pyridoxal phosphate)lysine" evidence="1">
    <location>
        <position position="252"/>
    </location>
</feature>
<accession>B1LDY3</accession>
<keyword id="KW-0032">Aminotransferase</keyword>
<keyword id="KW-0056">Arginine metabolism</keyword>
<keyword id="KW-0663">Pyridoxal phosphate</keyword>
<keyword id="KW-0808">Transferase</keyword>
<proteinExistence type="inferred from homology"/>
<dbReference type="EC" id="2.6.1.81" evidence="1"/>
<dbReference type="EMBL" id="CP000970">
    <property type="protein sequence ID" value="ACB15928.1"/>
    <property type="molecule type" value="Genomic_DNA"/>
</dbReference>
<dbReference type="RefSeq" id="WP_000081988.1">
    <property type="nucleotide sequence ID" value="NC_010498.1"/>
</dbReference>
<dbReference type="SMR" id="B1LDY3"/>
<dbReference type="KEGG" id="ecm:EcSMS35_1443"/>
<dbReference type="HOGENOM" id="CLU_016922_10_1_6"/>
<dbReference type="UniPathway" id="UPA00185">
    <property type="reaction ID" value="UER00281"/>
</dbReference>
<dbReference type="Proteomes" id="UP000007011">
    <property type="component" value="Chromosome"/>
</dbReference>
<dbReference type="GO" id="GO:0042802">
    <property type="term" value="F:identical protein binding"/>
    <property type="evidence" value="ECO:0007669"/>
    <property type="project" value="TreeGrafter"/>
</dbReference>
<dbReference type="GO" id="GO:0030170">
    <property type="term" value="F:pyridoxal phosphate binding"/>
    <property type="evidence" value="ECO:0007669"/>
    <property type="project" value="UniProtKB-UniRule"/>
</dbReference>
<dbReference type="GO" id="GO:0043825">
    <property type="term" value="F:succinylornithine transaminase activity"/>
    <property type="evidence" value="ECO:0007669"/>
    <property type="project" value="UniProtKB-EC"/>
</dbReference>
<dbReference type="GO" id="GO:1901607">
    <property type="term" value="P:alpha-amino acid biosynthetic process"/>
    <property type="evidence" value="ECO:0007669"/>
    <property type="project" value="UniProtKB-ARBA"/>
</dbReference>
<dbReference type="GO" id="GO:0019544">
    <property type="term" value="P:arginine catabolic process to glutamate"/>
    <property type="evidence" value="ECO:0007669"/>
    <property type="project" value="UniProtKB-UniRule"/>
</dbReference>
<dbReference type="GO" id="GO:0019545">
    <property type="term" value="P:arginine catabolic process to succinate"/>
    <property type="evidence" value="ECO:0007669"/>
    <property type="project" value="UniProtKB-UniRule"/>
</dbReference>
<dbReference type="GO" id="GO:0006593">
    <property type="term" value="P:ornithine catabolic process"/>
    <property type="evidence" value="ECO:0007669"/>
    <property type="project" value="InterPro"/>
</dbReference>
<dbReference type="CDD" id="cd00610">
    <property type="entry name" value="OAT_like"/>
    <property type="match status" value="1"/>
</dbReference>
<dbReference type="FunFam" id="3.40.640.10:FF:000004">
    <property type="entry name" value="Acetylornithine aminotransferase"/>
    <property type="match status" value="1"/>
</dbReference>
<dbReference type="FunFam" id="3.90.1150.10:FF:000009">
    <property type="entry name" value="Succinylornithine transaminase"/>
    <property type="match status" value="1"/>
</dbReference>
<dbReference type="Gene3D" id="3.90.1150.10">
    <property type="entry name" value="Aspartate Aminotransferase, domain 1"/>
    <property type="match status" value="1"/>
</dbReference>
<dbReference type="Gene3D" id="3.40.640.10">
    <property type="entry name" value="Type I PLP-dependent aspartate aminotransferase-like (Major domain)"/>
    <property type="match status" value="1"/>
</dbReference>
<dbReference type="HAMAP" id="MF_01107">
    <property type="entry name" value="ArgD_aminotrans_3"/>
    <property type="match status" value="1"/>
</dbReference>
<dbReference type="HAMAP" id="MF_01173">
    <property type="entry name" value="AstC_aminotrans_3"/>
    <property type="match status" value="1"/>
</dbReference>
<dbReference type="InterPro" id="IPR017652">
    <property type="entry name" value="Ac/SucOrn_transaminase_bac"/>
</dbReference>
<dbReference type="InterPro" id="IPR004636">
    <property type="entry name" value="AcOrn/SuccOrn_fam"/>
</dbReference>
<dbReference type="InterPro" id="IPR005814">
    <property type="entry name" value="Aminotrans_3"/>
</dbReference>
<dbReference type="InterPro" id="IPR049704">
    <property type="entry name" value="Aminotrans_3_PPA_site"/>
</dbReference>
<dbReference type="InterPro" id="IPR050103">
    <property type="entry name" value="Class-III_PLP-dep_AT"/>
</dbReference>
<dbReference type="InterPro" id="IPR015424">
    <property type="entry name" value="PyrdxlP-dep_Trfase"/>
</dbReference>
<dbReference type="InterPro" id="IPR015421">
    <property type="entry name" value="PyrdxlP-dep_Trfase_major"/>
</dbReference>
<dbReference type="InterPro" id="IPR015422">
    <property type="entry name" value="PyrdxlP-dep_Trfase_small"/>
</dbReference>
<dbReference type="InterPro" id="IPR026330">
    <property type="entry name" value="SOAT"/>
</dbReference>
<dbReference type="NCBIfam" id="TIGR03246">
    <property type="entry name" value="arg_catab_astC"/>
    <property type="match status" value="1"/>
</dbReference>
<dbReference type="NCBIfam" id="TIGR00707">
    <property type="entry name" value="argD"/>
    <property type="match status" value="1"/>
</dbReference>
<dbReference type="NCBIfam" id="NF002325">
    <property type="entry name" value="PRK01278.1"/>
    <property type="match status" value="1"/>
</dbReference>
<dbReference type="NCBIfam" id="NF003468">
    <property type="entry name" value="PRK05093.1"/>
    <property type="match status" value="1"/>
</dbReference>
<dbReference type="NCBIfam" id="NF009047">
    <property type="entry name" value="PRK12381.1"/>
    <property type="match status" value="1"/>
</dbReference>
<dbReference type="PANTHER" id="PTHR11986">
    <property type="entry name" value="AMINOTRANSFERASE CLASS III"/>
    <property type="match status" value="1"/>
</dbReference>
<dbReference type="PANTHER" id="PTHR11986:SF113">
    <property type="entry name" value="SUCCINYLORNITHINE TRANSAMINASE"/>
    <property type="match status" value="1"/>
</dbReference>
<dbReference type="Pfam" id="PF00202">
    <property type="entry name" value="Aminotran_3"/>
    <property type="match status" value="1"/>
</dbReference>
<dbReference type="PIRSF" id="PIRSF000521">
    <property type="entry name" value="Transaminase_4ab_Lys_Orn"/>
    <property type="match status" value="1"/>
</dbReference>
<dbReference type="SUPFAM" id="SSF53383">
    <property type="entry name" value="PLP-dependent transferases"/>
    <property type="match status" value="1"/>
</dbReference>
<dbReference type="PROSITE" id="PS00600">
    <property type="entry name" value="AA_TRANSFER_CLASS_3"/>
    <property type="match status" value="1"/>
</dbReference>
<protein>
    <recommendedName>
        <fullName evidence="1">Succinylornithine transaminase</fullName>
        <ecNumber evidence="1">2.6.1.81</ecNumber>
    </recommendedName>
    <alternativeName>
        <fullName evidence="1">Succinylornithine aminotransferase</fullName>
    </alternativeName>
</protein>
<comment type="function">
    <text evidence="1">Catalyzes the transamination of N(2)-succinylornithine and alpha-ketoglutarate into N(2)-succinylglutamate semialdehyde and glutamate. Can also act as an acetylornithine aminotransferase.</text>
</comment>
<comment type="catalytic activity">
    <reaction evidence="1">
        <text>N(2)-succinyl-L-ornithine + 2-oxoglutarate = N-succinyl-L-glutamate 5-semialdehyde + L-glutamate</text>
        <dbReference type="Rhea" id="RHEA:16953"/>
        <dbReference type="ChEBI" id="CHEBI:16810"/>
        <dbReference type="ChEBI" id="CHEBI:29985"/>
        <dbReference type="ChEBI" id="CHEBI:58514"/>
        <dbReference type="ChEBI" id="CHEBI:58520"/>
        <dbReference type="EC" id="2.6.1.81"/>
    </reaction>
</comment>
<comment type="cofactor">
    <cofactor evidence="1">
        <name>pyridoxal 5'-phosphate</name>
        <dbReference type="ChEBI" id="CHEBI:597326"/>
    </cofactor>
</comment>
<comment type="pathway">
    <text evidence="1">Amino-acid degradation; L-arginine degradation via AST pathway; L-glutamate and succinate from L-arginine: step 3/5.</text>
</comment>
<comment type="similarity">
    <text evidence="1">Belongs to the class-III pyridoxal-phosphate-dependent aminotransferase family. AstC subfamily.</text>
</comment>
<sequence>MSQPITRENFDEWMIPVYAPAPFIPVRGEGSRLWDQQGKEYIDFAGGIAVNALGHAHPELREALNEQASKFWHTGNGYTNEPVLRLAKKLIDATFADRVFFCNSGAEANEAALKLARKFAHDRYGSHKSGIVAFKNAFHGRTLFTVSAGGQPAYSQDFAPLPPDIHHAAYNDINSASALIDDATCAVIVEPIQGEGGVVPASNAFLQGLRELCDRHNALLIFDEVQTGVGRTGELYAYMHYGVTPDLLTTAKALGGGFPVGALLATEECASVMTVGTHGTTYGGNPLASAVAGKVLDLINTPEMLNGVKQRHDWFVERLNSINHHYGLFSEVRGLGLLIGCVLNADYAGQAKQISQEAAKAGVMVLIAGGNVVRFAPALNVSEEEVTTGLDRFAAACEHFVSRGSS</sequence>